<organism>
    <name type="scientific">Bacteroides fragilis (strain YCH46)</name>
    <dbReference type="NCBI Taxonomy" id="295405"/>
    <lineage>
        <taxon>Bacteria</taxon>
        <taxon>Pseudomonadati</taxon>
        <taxon>Bacteroidota</taxon>
        <taxon>Bacteroidia</taxon>
        <taxon>Bacteroidales</taxon>
        <taxon>Bacteroidaceae</taxon>
        <taxon>Bacteroides</taxon>
    </lineage>
</organism>
<keyword id="KW-0227">DNA damage</keyword>
<keyword id="KW-0233">DNA recombination</keyword>
<keyword id="KW-0234">DNA repair</keyword>
<sequence>MLQKTVGIVLHVLKYNDTSNIVEMYTELSGRASFLVTVPRSKKATVKSVLFQPLALIEFEADYRPNTSLFRIKEAKSFSPFTSIPYDPFKSAIALFLAEFLYRAIREEAENRPLFAYLQHSILWLDTCKISFANFHLVFLMRLSRFLGLYPNLDDYHAGDYFDMLNATFTSVRPQLHSSYIQPDEAGRLLQLMRMNYETMHLFGMNRTERARCLAIINEYYRLHLPDFPILKSLDVLKELFD</sequence>
<dbReference type="EMBL" id="AP006841">
    <property type="protein sequence ID" value="BAD47049.1"/>
    <property type="molecule type" value="Genomic_DNA"/>
</dbReference>
<dbReference type="RefSeq" id="WP_005783992.1">
    <property type="nucleotide sequence ID" value="NZ_UYXF01000014.1"/>
</dbReference>
<dbReference type="RefSeq" id="YP_097583.1">
    <property type="nucleotide sequence ID" value="NC_006347.1"/>
</dbReference>
<dbReference type="SMR" id="Q64ZM7"/>
<dbReference type="STRING" id="295405.BF0300"/>
<dbReference type="GeneID" id="60367759"/>
<dbReference type="KEGG" id="bfr:BF0300"/>
<dbReference type="PATRIC" id="fig|295405.11.peg.323"/>
<dbReference type="HOGENOM" id="CLU_087596_0_0_10"/>
<dbReference type="OrthoDB" id="9789152at2"/>
<dbReference type="Proteomes" id="UP000002197">
    <property type="component" value="Chromosome"/>
</dbReference>
<dbReference type="GO" id="GO:0043590">
    <property type="term" value="C:bacterial nucleoid"/>
    <property type="evidence" value="ECO:0007669"/>
    <property type="project" value="TreeGrafter"/>
</dbReference>
<dbReference type="GO" id="GO:0006310">
    <property type="term" value="P:DNA recombination"/>
    <property type="evidence" value="ECO:0007669"/>
    <property type="project" value="UniProtKB-UniRule"/>
</dbReference>
<dbReference type="GO" id="GO:0006302">
    <property type="term" value="P:double-strand break repair"/>
    <property type="evidence" value="ECO:0007669"/>
    <property type="project" value="TreeGrafter"/>
</dbReference>
<dbReference type="Gene3D" id="2.40.50.140">
    <property type="entry name" value="Nucleic acid-binding proteins"/>
    <property type="match status" value="1"/>
</dbReference>
<dbReference type="HAMAP" id="MF_00201">
    <property type="entry name" value="RecO"/>
    <property type="match status" value="1"/>
</dbReference>
<dbReference type="InterPro" id="IPR037278">
    <property type="entry name" value="ARFGAP/RecO"/>
</dbReference>
<dbReference type="InterPro" id="IPR022572">
    <property type="entry name" value="DNA_rep/recomb_RecO_N"/>
</dbReference>
<dbReference type="InterPro" id="IPR012340">
    <property type="entry name" value="NA-bd_OB-fold"/>
</dbReference>
<dbReference type="InterPro" id="IPR003717">
    <property type="entry name" value="RecO"/>
</dbReference>
<dbReference type="NCBIfam" id="TIGR00613">
    <property type="entry name" value="reco"/>
    <property type="match status" value="1"/>
</dbReference>
<dbReference type="PANTHER" id="PTHR33991">
    <property type="entry name" value="DNA REPAIR PROTEIN RECO"/>
    <property type="match status" value="1"/>
</dbReference>
<dbReference type="PANTHER" id="PTHR33991:SF1">
    <property type="entry name" value="DNA REPAIR PROTEIN RECO"/>
    <property type="match status" value="1"/>
</dbReference>
<dbReference type="Pfam" id="PF02565">
    <property type="entry name" value="RecO_C"/>
    <property type="match status" value="1"/>
</dbReference>
<dbReference type="Pfam" id="PF11967">
    <property type="entry name" value="RecO_N"/>
    <property type="match status" value="1"/>
</dbReference>
<dbReference type="SUPFAM" id="SSF57863">
    <property type="entry name" value="ArfGap/RecO-like zinc finger"/>
    <property type="match status" value="1"/>
</dbReference>
<name>RECO_BACFR</name>
<comment type="function">
    <text evidence="1">Involved in DNA repair and RecF pathway recombination.</text>
</comment>
<comment type="similarity">
    <text evidence="1">Belongs to the RecO family.</text>
</comment>
<proteinExistence type="inferred from homology"/>
<reference key="1">
    <citation type="journal article" date="2004" name="Proc. Natl. Acad. Sci. U.S.A.">
        <title>Genomic analysis of Bacteroides fragilis reveals extensive DNA inversions regulating cell surface adaptation.</title>
        <authorList>
            <person name="Kuwahara T."/>
            <person name="Yamashita A."/>
            <person name="Hirakawa H."/>
            <person name="Nakayama H."/>
            <person name="Toh H."/>
            <person name="Okada N."/>
            <person name="Kuhara S."/>
            <person name="Hattori M."/>
            <person name="Hayashi T."/>
            <person name="Ohnishi Y."/>
        </authorList>
    </citation>
    <scope>NUCLEOTIDE SEQUENCE [LARGE SCALE GENOMIC DNA]</scope>
    <source>
        <strain>YCH46</strain>
    </source>
</reference>
<evidence type="ECO:0000255" key="1">
    <source>
        <dbReference type="HAMAP-Rule" id="MF_00201"/>
    </source>
</evidence>
<protein>
    <recommendedName>
        <fullName evidence="1">DNA repair protein RecO</fullName>
    </recommendedName>
    <alternativeName>
        <fullName evidence="1">Recombination protein O</fullName>
    </alternativeName>
</protein>
<gene>
    <name evidence="1" type="primary">recO</name>
    <name type="ordered locus">BF0300</name>
</gene>
<accession>Q64ZM7</accession>
<feature type="chain" id="PRO_1000193358" description="DNA repair protein RecO">
    <location>
        <begin position="1"/>
        <end position="242"/>
    </location>
</feature>